<feature type="chain" id="PRO_1000205205" description="Oxygen-dependent coproporphyrinogen-III oxidase">
    <location>
        <begin position="1"/>
        <end position="279"/>
    </location>
</feature>
<feature type="region of interest" description="Important for dimerization" evidence="1">
    <location>
        <begin position="244"/>
        <end position="279"/>
    </location>
</feature>
<feature type="active site" description="Proton donor" evidence="1">
    <location>
        <position position="116"/>
    </location>
</feature>
<feature type="binding site" evidence="1">
    <location>
        <position position="102"/>
    </location>
    <ligand>
        <name>substrate</name>
    </ligand>
</feature>
<feature type="binding site" evidence="1">
    <location>
        <position position="106"/>
    </location>
    <ligand>
        <name>a divalent metal cation</name>
        <dbReference type="ChEBI" id="CHEBI:60240"/>
    </ligand>
</feature>
<feature type="binding site" evidence="1">
    <location>
        <position position="116"/>
    </location>
    <ligand>
        <name>a divalent metal cation</name>
        <dbReference type="ChEBI" id="CHEBI:60240"/>
    </ligand>
</feature>
<feature type="binding site" evidence="1">
    <location>
        <begin position="118"/>
        <end position="120"/>
    </location>
    <ligand>
        <name>substrate</name>
    </ligand>
</feature>
<feature type="binding site" evidence="1">
    <location>
        <position position="149"/>
    </location>
    <ligand>
        <name>a divalent metal cation</name>
        <dbReference type="ChEBI" id="CHEBI:60240"/>
    </ligand>
</feature>
<feature type="binding site" evidence="1">
    <location>
        <position position="179"/>
    </location>
    <ligand>
        <name>a divalent metal cation</name>
        <dbReference type="ChEBI" id="CHEBI:60240"/>
    </ligand>
</feature>
<feature type="site" description="Important for dimerization" evidence="1">
    <location>
        <position position="179"/>
    </location>
</feature>
<comment type="function">
    <text evidence="1">Involved in the heme biosynthesis. Catalyzes the aerobic oxidative decarboxylation of propionate groups of rings A and B of coproporphyrinogen-III to yield the vinyl groups in protoporphyrinogen-IX.</text>
</comment>
<comment type="catalytic activity">
    <reaction evidence="1">
        <text>coproporphyrinogen III + O2 + 2 H(+) = protoporphyrinogen IX + 2 CO2 + 2 H2O</text>
        <dbReference type="Rhea" id="RHEA:18257"/>
        <dbReference type="ChEBI" id="CHEBI:15377"/>
        <dbReference type="ChEBI" id="CHEBI:15378"/>
        <dbReference type="ChEBI" id="CHEBI:15379"/>
        <dbReference type="ChEBI" id="CHEBI:16526"/>
        <dbReference type="ChEBI" id="CHEBI:57307"/>
        <dbReference type="ChEBI" id="CHEBI:57309"/>
        <dbReference type="EC" id="1.3.3.3"/>
    </reaction>
</comment>
<comment type="cofactor">
    <cofactor evidence="1">
        <name>a divalent metal cation</name>
        <dbReference type="ChEBI" id="CHEBI:60240"/>
    </cofactor>
</comment>
<comment type="pathway">
    <text evidence="1">Porphyrin-containing compound metabolism; protoporphyrin-IX biosynthesis; protoporphyrinogen-IX from coproporphyrinogen-III (O2 route): step 1/1.</text>
</comment>
<comment type="subunit">
    <text evidence="1">Homodimer.</text>
</comment>
<comment type="subcellular location">
    <subcellularLocation>
        <location evidence="1">Cytoplasm</location>
    </subcellularLocation>
</comment>
<comment type="similarity">
    <text evidence="1">Belongs to the aerobic coproporphyrinogen-III oxidase family.</text>
</comment>
<dbReference type="EC" id="1.3.3.3" evidence="1"/>
<dbReference type="EMBL" id="CP001612">
    <property type="protein sequence ID" value="ACP54015.1"/>
    <property type="molecule type" value="Genomic_DNA"/>
</dbReference>
<dbReference type="RefSeq" id="WP_012720121.1">
    <property type="nucleotide sequence ID" value="NC_012633.1"/>
</dbReference>
<dbReference type="SMR" id="C3PM25"/>
<dbReference type="KEGG" id="raf:RAF_ORF1254"/>
<dbReference type="HOGENOM" id="CLU_026169_0_1_5"/>
<dbReference type="UniPathway" id="UPA00251">
    <property type="reaction ID" value="UER00322"/>
</dbReference>
<dbReference type="Proteomes" id="UP000002305">
    <property type="component" value="Chromosome"/>
</dbReference>
<dbReference type="GO" id="GO:0005737">
    <property type="term" value="C:cytoplasm"/>
    <property type="evidence" value="ECO:0007669"/>
    <property type="project" value="UniProtKB-SubCell"/>
</dbReference>
<dbReference type="GO" id="GO:0004109">
    <property type="term" value="F:coproporphyrinogen oxidase activity"/>
    <property type="evidence" value="ECO:0007669"/>
    <property type="project" value="UniProtKB-UniRule"/>
</dbReference>
<dbReference type="GO" id="GO:0046872">
    <property type="term" value="F:metal ion binding"/>
    <property type="evidence" value="ECO:0007669"/>
    <property type="project" value="UniProtKB-KW"/>
</dbReference>
<dbReference type="GO" id="GO:0042803">
    <property type="term" value="F:protein homodimerization activity"/>
    <property type="evidence" value="ECO:0000250"/>
    <property type="project" value="UniProtKB"/>
</dbReference>
<dbReference type="GO" id="GO:0006782">
    <property type="term" value="P:protoporphyrinogen IX biosynthetic process"/>
    <property type="evidence" value="ECO:0007669"/>
    <property type="project" value="UniProtKB-UniRule"/>
</dbReference>
<dbReference type="FunFam" id="3.40.1500.10:FF:000005">
    <property type="entry name" value="Oxygen-dependent coproporphyrinogen-III oxidase"/>
    <property type="match status" value="1"/>
</dbReference>
<dbReference type="Gene3D" id="3.40.1500.10">
    <property type="entry name" value="Coproporphyrinogen III oxidase, aerobic"/>
    <property type="match status" value="1"/>
</dbReference>
<dbReference type="HAMAP" id="MF_00333">
    <property type="entry name" value="Coprogen_oxidas"/>
    <property type="match status" value="1"/>
</dbReference>
<dbReference type="InterPro" id="IPR001260">
    <property type="entry name" value="Coprogen_oxidase_aer"/>
</dbReference>
<dbReference type="InterPro" id="IPR036406">
    <property type="entry name" value="Coprogen_oxidase_aer_sf"/>
</dbReference>
<dbReference type="InterPro" id="IPR018375">
    <property type="entry name" value="Coprogen_oxidase_CS"/>
</dbReference>
<dbReference type="NCBIfam" id="NF003727">
    <property type="entry name" value="PRK05330.1"/>
    <property type="match status" value="1"/>
</dbReference>
<dbReference type="PANTHER" id="PTHR10755">
    <property type="entry name" value="COPROPORPHYRINOGEN III OXIDASE, MITOCHONDRIAL"/>
    <property type="match status" value="1"/>
</dbReference>
<dbReference type="PANTHER" id="PTHR10755:SF0">
    <property type="entry name" value="OXYGEN-DEPENDENT COPROPORPHYRINOGEN-III OXIDASE, MITOCHONDRIAL"/>
    <property type="match status" value="1"/>
</dbReference>
<dbReference type="Pfam" id="PF01218">
    <property type="entry name" value="Coprogen_oxidas"/>
    <property type="match status" value="1"/>
</dbReference>
<dbReference type="PIRSF" id="PIRSF000166">
    <property type="entry name" value="Coproporphyri_ox"/>
    <property type="match status" value="1"/>
</dbReference>
<dbReference type="PRINTS" id="PR00073">
    <property type="entry name" value="COPRGNOXDASE"/>
</dbReference>
<dbReference type="SUPFAM" id="SSF102886">
    <property type="entry name" value="Coproporphyrinogen III oxidase"/>
    <property type="match status" value="1"/>
</dbReference>
<dbReference type="PROSITE" id="PS01021">
    <property type="entry name" value="COPROGEN_OXIDASE"/>
    <property type="match status" value="1"/>
</dbReference>
<organism>
    <name type="scientific">Rickettsia africae (strain ESF-5)</name>
    <dbReference type="NCBI Taxonomy" id="347255"/>
    <lineage>
        <taxon>Bacteria</taxon>
        <taxon>Pseudomonadati</taxon>
        <taxon>Pseudomonadota</taxon>
        <taxon>Alphaproteobacteria</taxon>
        <taxon>Rickettsiales</taxon>
        <taxon>Rickettsiaceae</taxon>
        <taxon>Rickettsieae</taxon>
        <taxon>Rickettsia</taxon>
        <taxon>spotted fever group</taxon>
    </lineage>
</organism>
<reference key="1">
    <citation type="journal article" date="2009" name="BMC Genomics">
        <title>Analysis of the Rickettsia africae genome reveals that virulence acquisition in Rickettsia species may be explained by genome reduction.</title>
        <authorList>
            <person name="Fournier P.-E."/>
            <person name="El Karkouri K."/>
            <person name="Leroy Q."/>
            <person name="Robert C."/>
            <person name="Giumelli B."/>
            <person name="Renesto P."/>
            <person name="Socolovschi C."/>
            <person name="Parola P."/>
            <person name="Audic S."/>
            <person name="Raoult D."/>
        </authorList>
    </citation>
    <scope>NUCLEOTIDE SEQUENCE [LARGE SCALE GENOMIC DNA]</scope>
    <source>
        <strain>ESF-5</strain>
    </source>
</reference>
<proteinExistence type="inferred from homology"/>
<protein>
    <recommendedName>
        <fullName evidence="1">Oxygen-dependent coproporphyrinogen-III oxidase</fullName>
        <shortName evidence="1">CPO</shortName>
        <shortName evidence="1">Coprogen oxidase</shortName>
        <shortName evidence="1">Coproporphyrinogenase</shortName>
        <ecNumber evidence="1">1.3.3.3</ecNumber>
    </recommendedName>
</protein>
<keyword id="KW-0963">Cytoplasm</keyword>
<keyword id="KW-0350">Heme biosynthesis</keyword>
<keyword id="KW-0479">Metal-binding</keyword>
<keyword id="KW-0560">Oxidoreductase</keyword>
<keyword id="KW-0627">Porphyrin biosynthesis</keyword>
<name>HEM6_RICAE</name>
<accession>C3PM25</accession>
<gene>
    <name evidence="1" type="primary">hemF</name>
    <name type="ordered locus">RAF_ORF1254</name>
</gene>
<sequence>MNIENKEITSSWFTNLRDLLCKEFEKIEEEYAQTKGLKPAKFVRSSWQRNGGGGGVMSLMKGAVFEKVGVNISTVFGKISSEFRNEIPGAELDGKFFATGISLVAHLKSPLIPAMHFNTRYIETSKSWFGGGGDLTPFYPEKNETVKFHAAFKEACDKYDSSYYPKFKKQCDEYFYLKHRKEPRGVGGIFYDYLNNGNFEQDFAFTQDVGKALLSVYPEIVRSKLFLPWTAEQKEYQLIRRGRYVEFNLLYDRGTKFGLMTDGNVEAILMSLPPEVKFN</sequence>
<evidence type="ECO:0000255" key="1">
    <source>
        <dbReference type="HAMAP-Rule" id="MF_00333"/>
    </source>
</evidence>